<comment type="function">
    <text evidence="1">Involved in peptide bond synthesis. Stimulates efficient translation and peptide-bond synthesis on native or reconstituted 70S ribosomes in vitro. Probably functions indirectly by altering the affinity of the ribosome for aminoacyl-tRNA, thus increasing their reactivity as acceptors for peptidyl transferase.</text>
</comment>
<comment type="pathway">
    <text evidence="1">Protein biosynthesis; polypeptide chain elongation.</text>
</comment>
<comment type="subcellular location">
    <subcellularLocation>
        <location evidence="1">Cytoplasm</location>
    </subcellularLocation>
</comment>
<comment type="similarity">
    <text evidence="1">Belongs to the elongation factor P family.</text>
</comment>
<proteinExistence type="inferred from homology"/>
<evidence type="ECO:0000255" key="1">
    <source>
        <dbReference type="HAMAP-Rule" id="MF_00141"/>
    </source>
</evidence>
<reference key="1">
    <citation type="journal article" date="2009" name="BMC Genomics">
        <title>Complete genome sequence of the sugarcane nitrogen-fixing endophyte Gluconacetobacter diazotrophicus Pal5.</title>
        <authorList>
            <person name="Bertalan M."/>
            <person name="Albano R."/>
            <person name="de Padua V."/>
            <person name="Rouws L."/>
            <person name="Rojas C."/>
            <person name="Hemerly A."/>
            <person name="Teixeira K."/>
            <person name="Schwab S."/>
            <person name="Araujo J."/>
            <person name="Oliveira A."/>
            <person name="Franca L."/>
            <person name="Magalhaes V."/>
            <person name="Alqueres S."/>
            <person name="Cardoso A."/>
            <person name="Almeida W."/>
            <person name="Loureiro M.M."/>
            <person name="Nogueira E."/>
            <person name="Cidade D."/>
            <person name="Oliveira D."/>
            <person name="Simao T."/>
            <person name="Macedo J."/>
            <person name="Valadao A."/>
            <person name="Dreschsel M."/>
            <person name="Freitas F."/>
            <person name="Vidal M."/>
            <person name="Guedes H."/>
            <person name="Rodrigues E."/>
            <person name="Meneses C."/>
            <person name="Brioso P."/>
            <person name="Pozzer L."/>
            <person name="Figueiredo D."/>
            <person name="Montano H."/>
            <person name="Junior J."/>
            <person name="de Souza Filho G."/>
            <person name="Martin Quintana Flores V."/>
            <person name="Ferreira B."/>
            <person name="Branco A."/>
            <person name="Gonzalez P."/>
            <person name="Guillobel H."/>
            <person name="Lemos M."/>
            <person name="Seibel L."/>
            <person name="Macedo J."/>
            <person name="Alves-Ferreira M."/>
            <person name="Sachetto-Martins G."/>
            <person name="Coelho A."/>
            <person name="Santos E."/>
            <person name="Amaral G."/>
            <person name="Neves A."/>
            <person name="Pacheco A.B."/>
            <person name="Carvalho D."/>
            <person name="Lery L."/>
            <person name="Bisch P."/>
            <person name="Rossle S.C."/>
            <person name="Urmenyi T."/>
            <person name="Rael Pereira A."/>
            <person name="Silva R."/>
            <person name="Rondinelli E."/>
            <person name="von Kruger W."/>
            <person name="Martins O."/>
            <person name="Baldani J.I."/>
            <person name="Ferreira P.C."/>
        </authorList>
    </citation>
    <scope>NUCLEOTIDE SEQUENCE [LARGE SCALE GENOMIC DNA]</scope>
    <source>
        <strain>ATCC 49037 / DSM 5601 / CCUG 37298 / CIP 103539 / LMG 7603 / PAl5</strain>
    </source>
</reference>
<reference key="2">
    <citation type="journal article" date="2010" name="Stand. Genomic Sci.">
        <title>Two genome sequences of the same bacterial strain, Gluconacetobacter diazotrophicus PAl 5, suggest a new standard in genome sequence submission.</title>
        <authorList>
            <person name="Giongo A."/>
            <person name="Tyler H.L."/>
            <person name="Zipperer U.N."/>
            <person name="Triplett E.W."/>
        </authorList>
    </citation>
    <scope>NUCLEOTIDE SEQUENCE [LARGE SCALE GENOMIC DNA]</scope>
    <source>
        <strain>ATCC 49037 / DSM 5601 / CCUG 37298 / CIP 103539 / LMG 7603 / PAl5</strain>
    </source>
</reference>
<keyword id="KW-0963">Cytoplasm</keyword>
<keyword id="KW-0251">Elongation factor</keyword>
<keyword id="KW-0648">Protein biosynthesis</keyword>
<keyword id="KW-1185">Reference proteome</keyword>
<name>EFP_GLUDA</name>
<sequence>MKQQANLIRAGQVIEHDGRRWTVLKQQIITPGKGGAFIQVEMRDLKTGNKTNERWRTADTVERLLTEEKEYTYSYMDGDNIVLMDPETFEQTLLPLDLLGDQAPFLQDNMVLVVNLVEGDPVGVTLPAQVTLEIIEADPVVKGQTASSSYKPAKLSNGVKTMVPPFIEAGERIVVRTEDASYVERAKG</sequence>
<accession>A9H6E1</accession>
<accession>B5ZIN7</accession>
<organism>
    <name type="scientific">Gluconacetobacter diazotrophicus (strain ATCC 49037 / DSM 5601 / CCUG 37298 / CIP 103539 / LMG 7603 / PAl5)</name>
    <dbReference type="NCBI Taxonomy" id="272568"/>
    <lineage>
        <taxon>Bacteria</taxon>
        <taxon>Pseudomonadati</taxon>
        <taxon>Pseudomonadota</taxon>
        <taxon>Alphaproteobacteria</taxon>
        <taxon>Acetobacterales</taxon>
        <taxon>Acetobacteraceae</taxon>
        <taxon>Gluconacetobacter</taxon>
    </lineage>
</organism>
<gene>
    <name evidence="1" type="primary">efp</name>
    <name type="ordered locus">GDI0507</name>
    <name type="ordered locus">Gdia_1500</name>
</gene>
<dbReference type="EMBL" id="AM889285">
    <property type="protein sequence ID" value="CAP54450.1"/>
    <property type="molecule type" value="Genomic_DNA"/>
</dbReference>
<dbReference type="EMBL" id="CP001189">
    <property type="protein sequence ID" value="ACI51279.1"/>
    <property type="molecule type" value="Genomic_DNA"/>
</dbReference>
<dbReference type="RefSeq" id="WP_012222957.1">
    <property type="nucleotide sequence ID" value="NC_010125.1"/>
</dbReference>
<dbReference type="SMR" id="A9H6E1"/>
<dbReference type="STRING" id="272568.GDI0507"/>
<dbReference type="KEGG" id="gdi:GDI0507"/>
<dbReference type="KEGG" id="gdj:Gdia_1500"/>
<dbReference type="eggNOG" id="COG0231">
    <property type="taxonomic scope" value="Bacteria"/>
</dbReference>
<dbReference type="HOGENOM" id="CLU_074944_1_1_5"/>
<dbReference type="OrthoDB" id="9801844at2"/>
<dbReference type="UniPathway" id="UPA00345"/>
<dbReference type="Proteomes" id="UP000001176">
    <property type="component" value="Chromosome"/>
</dbReference>
<dbReference type="GO" id="GO:0005737">
    <property type="term" value="C:cytoplasm"/>
    <property type="evidence" value="ECO:0007669"/>
    <property type="project" value="UniProtKB-SubCell"/>
</dbReference>
<dbReference type="GO" id="GO:0003746">
    <property type="term" value="F:translation elongation factor activity"/>
    <property type="evidence" value="ECO:0007669"/>
    <property type="project" value="UniProtKB-UniRule"/>
</dbReference>
<dbReference type="GO" id="GO:0043043">
    <property type="term" value="P:peptide biosynthetic process"/>
    <property type="evidence" value="ECO:0007669"/>
    <property type="project" value="InterPro"/>
</dbReference>
<dbReference type="CDD" id="cd04470">
    <property type="entry name" value="S1_EF-P_repeat_1"/>
    <property type="match status" value="1"/>
</dbReference>
<dbReference type="CDD" id="cd05794">
    <property type="entry name" value="S1_EF-P_repeat_2"/>
    <property type="match status" value="1"/>
</dbReference>
<dbReference type="FunFam" id="2.30.30.30:FF:000003">
    <property type="entry name" value="Elongation factor P"/>
    <property type="match status" value="1"/>
</dbReference>
<dbReference type="FunFam" id="2.40.50.140:FF:000004">
    <property type="entry name" value="Elongation factor P"/>
    <property type="match status" value="1"/>
</dbReference>
<dbReference type="FunFam" id="2.40.50.140:FF:000009">
    <property type="entry name" value="Elongation factor P"/>
    <property type="match status" value="1"/>
</dbReference>
<dbReference type="Gene3D" id="2.30.30.30">
    <property type="match status" value="1"/>
</dbReference>
<dbReference type="Gene3D" id="2.40.50.140">
    <property type="entry name" value="Nucleic acid-binding proteins"/>
    <property type="match status" value="2"/>
</dbReference>
<dbReference type="HAMAP" id="MF_00141">
    <property type="entry name" value="EF_P"/>
    <property type="match status" value="1"/>
</dbReference>
<dbReference type="InterPro" id="IPR015365">
    <property type="entry name" value="Elong-fact-P_C"/>
</dbReference>
<dbReference type="InterPro" id="IPR012340">
    <property type="entry name" value="NA-bd_OB-fold"/>
</dbReference>
<dbReference type="InterPro" id="IPR014722">
    <property type="entry name" value="Rib_uL2_dom2"/>
</dbReference>
<dbReference type="InterPro" id="IPR020599">
    <property type="entry name" value="Transl_elong_fac_P/YeiP"/>
</dbReference>
<dbReference type="InterPro" id="IPR013185">
    <property type="entry name" value="Transl_elong_KOW-like"/>
</dbReference>
<dbReference type="InterPro" id="IPR001059">
    <property type="entry name" value="Transl_elong_P/YeiP_cen"/>
</dbReference>
<dbReference type="InterPro" id="IPR013852">
    <property type="entry name" value="Transl_elong_P/YeiP_CS"/>
</dbReference>
<dbReference type="InterPro" id="IPR011768">
    <property type="entry name" value="Transl_elongation_fac_P"/>
</dbReference>
<dbReference type="InterPro" id="IPR008991">
    <property type="entry name" value="Translation_prot_SH3-like_sf"/>
</dbReference>
<dbReference type="NCBIfam" id="TIGR00038">
    <property type="entry name" value="efp"/>
    <property type="match status" value="1"/>
</dbReference>
<dbReference type="NCBIfam" id="NF001810">
    <property type="entry name" value="PRK00529.1"/>
    <property type="match status" value="1"/>
</dbReference>
<dbReference type="PANTHER" id="PTHR30053">
    <property type="entry name" value="ELONGATION FACTOR P"/>
    <property type="match status" value="1"/>
</dbReference>
<dbReference type="PANTHER" id="PTHR30053:SF14">
    <property type="entry name" value="TRANSLATION ELONGATION FACTOR KOW-LIKE DOMAIN-CONTAINING PROTEIN"/>
    <property type="match status" value="1"/>
</dbReference>
<dbReference type="Pfam" id="PF01132">
    <property type="entry name" value="EFP"/>
    <property type="match status" value="1"/>
</dbReference>
<dbReference type="Pfam" id="PF08207">
    <property type="entry name" value="EFP_N"/>
    <property type="match status" value="1"/>
</dbReference>
<dbReference type="Pfam" id="PF09285">
    <property type="entry name" value="Elong-fact-P_C"/>
    <property type="match status" value="1"/>
</dbReference>
<dbReference type="PIRSF" id="PIRSF005901">
    <property type="entry name" value="EF-P"/>
    <property type="match status" value="1"/>
</dbReference>
<dbReference type="SMART" id="SM01185">
    <property type="entry name" value="EFP"/>
    <property type="match status" value="1"/>
</dbReference>
<dbReference type="SMART" id="SM00841">
    <property type="entry name" value="Elong-fact-P_C"/>
    <property type="match status" value="1"/>
</dbReference>
<dbReference type="SUPFAM" id="SSF50249">
    <property type="entry name" value="Nucleic acid-binding proteins"/>
    <property type="match status" value="2"/>
</dbReference>
<dbReference type="SUPFAM" id="SSF50104">
    <property type="entry name" value="Translation proteins SH3-like domain"/>
    <property type="match status" value="1"/>
</dbReference>
<dbReference type="PROSITE" id="PS01275">
    <property type="entry name" value="EFP"/>
    <property type="match status" value="1"/>
</dbReference>
<protein>
    <recommendedName>
        <fullName evidence="1">Elongation factor P</fullName>
        <shortName evidence="1">EF-P</shortName>
    </recommendedName>
</protein>
<feature type="chain" id="PRO_1000076516" description="Elongation factor P">
    <location>
        <begin position="1"/>
        <end position="188"/>
    </location>
</feature>